<gene>
    <name type="primary">IRS4</name>
    <name type="ORF">PGUG_00602</name>
</gene>
<feature type="chain" id="PRO_0000308763" description="Increased rDNA silencing protein 4">
    <location>
        <begin position="1"/>
        <end position="667"/>
    </location>
</feature>
<feature type="domain" description="EH" evidence="2">
    <location>
        <begin position="568"/>
        <end position="661"/>
    </location>
</feature>
<feature type="region of interest" description="Disordered" evidence="3">
    <location>
        <begin position="1"/>
        <end position="123"/>
    </location>
</feature>
<feature type="region of interest" description="Disordered" evidence="3">
    <location>
        <begin position="133"/>
        <end position="152"/>
    </location>
</feature>
<feature type="region of interest" description="Disordered" evidence="3">
    <location>
        <begin position="234"/>
        <end position="441"/>
    </location>
</feature>
<feature type="region of interest" description="Disordered" evidence="3">
    <location>
        <begin position="459"/>
        <end position="488"/>
    </location>
</feature>
<feature type="compositionally biased region" description="Polar residues" evidence="3">
    <location>
        <begin position="1"/>
        <end position="10"/>
    </location>
</feature>
<feature type="compositionally biased region" description="Polar residues" evidence="3">
    <location>
        <begin position="18"/>
        <end position="33"/>
    </location>
</feature>
<feature type="compositionally biased region" description="Polar residues" evidence="3">
    <location>
        <begin position="46"/>
        <end position="61"/>
    </location>
</feature>
<feature type="compositionally biased region" description="Basic and acidic residues" evidence="3">
    <location>
        <begin position="81"/>
        <end position="91"/>
    </location>
</feature>
<feature type="compositionally biased region" description="Polar residues" evidence="3">
    <location>
        <begin position="92"/>
        <end position="109"/>
    </location>
</feature>
<feature type="compositionally biased region" description="Low complexity" evidence="3">
    <location>
        <begin position="110"/>
        <end position="121"/>
    </location>
</feature>
<feature type="compositionally biased region" description="Basic and acidic residues" evidence="3">
    <location>
        <begin position="133"/>
        <end position="144"/>
    </location>
</feature>
<feature type="compositionally biased region" description="Polar residues" evidence="3">
    <location>
        <begin position="234"/>
        <end position="248"/>
    </location>
</feature>
<feature type="compositionally biased region" description="Basic and acidic residues" evidence="3">
    <location>
        <begin position="276"/>
        <end position="289"/>
    </location>
</feature>
<feature type="compositionally biased region" description="Low complexity" evidence="3">
    <location>
        <begin position="298"/>
        <end position="312"/>
    </location>
</feature>
<feature type="compositionally biased region" description="Basic and acidic residues" evidence="3">
    <location>
        <begin position="325"/>
        <end position="335"/>
    </location>
</feature>
<feature type="compositionally biased region" description="Low complexity" evidence="3">
    <location>
        <begin position="358"/>
        <end position="371"/>
    </location>
</feature>
<feature type="compositionally biased region" description="Polar residues" evidence="3">
    <location>
        <begin position="376"/>
        <end position="394"/>
    </location>
</feature>
<feature type="compositionally biased region" description="Polar residues" evidence="3">
    <location>
        <begin position="424"/>
        <end position="437"/>
    </location>
</feature>
<sequence>MSAGQSTSQAAALAAFKSISTHPKTDQNPSKVHQSPERNVKRNPSGRLTNSRNATAVNAINRSPPKAPQKPQLSVVTASGHETKKNVENNRQRSSSPSPLYRTTTPKQMTSPSTSSASLPSNMIKSVKDSIEAKRHASEAKRLAQENQPSDMLTKIRQSINDRTRNIPNQAKVNERNMATINGIRESIESKRITTQANSSMIVLDTSSNSPYNFAPPDELRSPYEAHSPNYSYSSFESVPSAYSNPDSNIDLHDRGPETPSIVVDSPFNSQYDLSSPREDSDIDQERRNTAPILIPPSSNACARSANSAGSADDARSHLSSLKYQVEKEKNEDKNKKPKRKPPPELKPTTDLDGAFFSDSSSLNPGSSRSSLDAGSYSTDNESMGRNRMGSNDSDLSKPIKLPQYPELDTSSTKFKIRKRHGESNQNVGKMTESGSESDFEYPKATVPVSRATAPPLVHQKSQHVQLKTTMRDSKKKKKDKKSFDVDKPWKNHSDLDRISEADRKRYEGVWASNRGTYFNYVVTRINGIDYGSGGGSEQKIIVDEEDSMKAARLSAKQQADTVSGANGGYQSAEFHNITNAEISQLIHSSVVERIWERSRLPSETLRDIWELVDYRKDGTLNKPEFLVGMWLVDQCLYGRKLTKKVPASVWESLEGIGVSVKKKGKR</sequence>
<organism>
    <name type="scientific">Meyerozyma guilliermondii (strain ATCC 6260 / CBS 566 / DSM 6381 / JCM 1539 / NBRC 10279 / NRRL Y-324)</name>
    <name type="common">Yeast</name>
    <name type="synonym">Candida guilliermondii</name>
    <dbReference type="NCBI Taxonomy" id="294746"/>
    <lineage>
        <taxon>Eukaryota</taxon>
        <taxon>Fungi</taxon>
        <taxon>Dikarya</taxon>
        <taxon>Ascomycota</taxon>
        <taxon>Saccharomycotina</taxon>
        <taxon>Pichiomycetes</taxon>
        <taxon>Debaryomycetaceae</taxon>
        <taxon>Meyerozyma</taxon>
    </lineage>
</organism>
<evidence type="ECO:0000250" key="1"/>
<evidence type="ECO:0000255" key="2">
    <source>
        <dbReference type="PROSITE-ProRule" id="PRU00077"/>
    </source>
</evidence>
<evidence type="ECO:0000256" key="3">
    <source>
        <dbReference type="SAM" id="MobiDB-lite"/>
    </source>
</evidence>
<evidence type="ECO:0000305" key="4"/>
<keyword id="KW-0443">Lipid metabolism</keyword>
<keyword id="KW-1185">Reference proteome</keyword>
<name>IRS4_PICGU</name>
<protein>
    <recommendedName>
        <fullName>Increased rDNA silencing protein 4</fullName>
    </recommendedName>
</protein>
<reference key="1">
    <citation type="journal article" date="2009" name="Nature">
        <title>Evolution of pathogenicity and sexual reproduction in eight Candida genomes.</title>
        <authorList>
            <person name="Butler G."/>
            <person name="Rasmussen M.D."/>
            <person name="Lin M.F."/>
            <person name="Santos M.A.S."/>
            <person name="Sakthikumar S."/>
            <person name="Munro C.A."/>
            <person name="Rheinbay E."/>
            <person name="Grabherr M."/>
            <person name="Forche A."/>
            <person name="Reedy J.L."/>
            <person name="Agrafioti I."/>
            <person name="Arnaud M.B."/>
            <person name="Bates S."/>
            <person name="Brown A.J.P."/>
            <person name="Brunke S."/>
            <person name="Costanzo M.C."/>
            <person name="Fitzpatrick D.A."/>
            <person name="de Groot P.W.J."/>
            <person name="Harris D."/>
            <person name="Hoyer L.L."/>
            <person name="Hube B."/>
            <person name="Klis F.M."/>
            <person name="Kodira C."/>
            <person name="Lennard N."/>
            <person name="Logue M.E."/>
            <person name="Martin R."/>
            <person name="Neiman A.M."/>
            <person name="Nikolaou E."/>
            <person name="Quail M.A."/>
            <person name="Quinn J."/>
            <person name="Santos M.C."/>
            <person name="Schmitzberger F.F."/>
            <person name="Sherlock G."/>
            <person name="Shah P."/>
            <person name="Silverstein K.A.T."/>
            <person name="Skrzypek M.S."/>
            <person name="Soll D."/>
            <person name="Staggs R."/>
            <person name="Stansfield I."/>
            <person name="Stumpf M.P.H."/>
            <person name="Sudbery P.E."/>
            <person name="Srikantha T."/>
            <person name="Zeng Q."/>
            <person name="Berman J."/>
            <person name="Berriman M."/>
            <person name="Heitman J."/>
            <person name="Gow N.A.R."/>
            <person name="Lorenz M.C."/>
            <person name="Birren B.W."/>
            <person name="Kellis M."/>
            <person name="Cuomo C.A."/>
        </authorList>
    </citation>
    <scope>NUCLEOTIDE SEQUENCE [LARGE SCALE GENOMIC DNA]</scope>
    <source>
        <strain>ATCC 6260 / CBS 566 / DSM 6381 / JCM 1539 / NBRC 10279 / NRRL Y-324</strain>
    </source>
</reference>
<comment type="function">
    <text evidence="1">Positive regulator of phosphatidylinositol 4,5-bisphosphate turnover and negatively regulates signaling through the cell integrity pathway. Involved in rDNA silencing (By similarity).</text>
</comment>
<comment type="similarity">
    <text evidence="4">Belongs to the IRS4 family.</text>
</comment>
<proteinExistence type="inferred from homology"/>
<dbReference type="EMBL" id="CH408155">
    <property type="protein sequence ID" value="EDK36504.2"/>
    <property type="molecule type" value="Genomic_DNA"/>
</dbReference>
<dbReference type="RefSeq" id="XP_001487225.1">
    <property type="nucleotide sequence ID" value="XM_001487175.1"/>
</dbReference>
<dbReference type="SMR" id="A5DBE7"/>
<dbReference type="FunCoup" id="A5DBE7">
    <property type="interactions" value="37"/>
</dbReference>
<dbReference type="STRING" id="294746.A5DBE7"/>
<dbReference type="GeneID" id="5128806"/>
<dbReference type="KEGG" id="pgu:PGUG_00602"/>
<dbReference type="VEuPathDB" id="FungiDB:PGUG_00602"/>
<dbReference type="eggNOG" id="KOG0998">
    <property type="taxonomic scope" value="Eukaryota"/>
</dbReference>
<dbReference type="HOGENOM" id="CLU_020874_0_0_1"/>
<dbReference type="InParanoid" id="A5DBE7"/>
<dbReference type="OMA" id="WDLVDFR"/>
<dbReference type="OrthoDB" id="10045710at2759"/>
<dbReference type="Proteomes" id="UP000001997">
    <property type="component" value="Unassembled WGS sequence"/>
</dbReference>
<dbReference type="GO" id="GO:0006629">
    <property type="term" value="P:lipid metabolic process"/>
    <property type="evidence" value="ECO:0007669"/>
    <property type="project" value="UniProtKB-KW"/>
</dbReference>
<dbReference type="CDD" id="cd00052">
    <property type="entry name" value="EH"/>
    <property type="match status" value="1"/>
</dbReference>
<dbReference type="Gene3D" id="1.10.238.10">
    <property type="entry name" value="EF-hand"/>
    <property type="match status" value="1"/>
</dbReference>
<dbReference type="InterPro" id="IPR011992">
    <property type="entry name" value="EF-hand-dom_pair"/>
</dbReference>
<dbReference type="InterPro" id="IPR000261">
    <property type="entry name" value="EH_dom"/>
</dbReference>
<dbReference type="Pfam" id="PF12763">
    <property type="entry name" value="EH"/>
    <property type="match status" value="1"/>
</dbReference>
<dbReference type="SMART" id="SM00027">
    <property type="entry name" value="EH"/>
    <property type="match status" value="1"/>
</dbReference>
<dbReference type="SUPFAM" id="SSF47473">
    <property type="entry name" value="EF-hand"/>
    <property type="match status" value="1"/>
</dbReference>
<dbReference type="PROSITE" id="PS50031">
    <property type="entry name" value="EH"/>
    <property type="match status" value="1"/>
</dbReference>
<accession>A5DBE7</accession>